<keyword id="KW-0012">Acyltransferase</keyword>
<keyword id="KW-0378">Hydrolase</keyword>
<keyword id="KW-0645">Protease</keyword>
<keyword id="KW-1185">Reference proteome</keyword>
<keyword id="KW-0808">Transferase</keyword>
<keyword id="KW-0865">Zymogen</keyword>
<name>YWRD_BACSU</name>
<evidence type="ECO:0000250" key="1"/>
<evidence type="ECO:0000269" key="2">
    <source>
    </source>
</evidence>
<evidence type="ECO:0000269" key="3">
    <source>
    </source>
</evidence>
<evidence type="ECO:0000305" key="4"/>
<evidence type="ECO:0000305" key="5">
    <source>
    </source>
</evidence>
<protein>
    <recommendedName>
        <fullName>Glutathione hydrolase-like YwrD proenzyme</fullName>
        <ecNumber>2.3.2.2</ecNumber>
    </recommendedName>
    <alternativeName>
        <fullName>Putative gamma-glutamyltransferase YwrD</fullName>
        <ecNumber>3.4.19.13</ecNumber>
    </alternativeName>
    <component>
        <recommendedName>
            <fullName>Glutathione hydrolase-like YwrD large chain</fullName>
        </recommendedName>
    </component>
    <component>
        <recommendedName>
            <fullName>Glutathione hydrolase-like YwrD small chain</fullName>
        </recommendedName>
    </component>
</protein>
<reference key="1">
    <citation type="journal article" date="1997" name="Microbiology">
        <title>The Bacillus subtilis genome from gerBC (311 degrees) to licR (334 degrees).</title>
        <authorList>
            <person name="Presecan E."/>
            <person name="Moszer I."/>
            <person name="Boursier L."/>
            <person name="Cruz Ramos H."/>
            <person name="De La Fuente V."/>
            <person name="Hullo M.-F."/>
            <person name="Lelong C."/>
            <person name="Schleich S."/>
            <person name="Sekowska A."/>
            <person name="Song B.H."/>
            <person name="Villani G."/>
            <person name="Kunst F."/>
            <person name="Danchin A."/>
            <person name="Glaser P."/>
        </authorList>
    </citation>
    <scope>NUCLEOTIDE SEQUENCE [GENOMIC DNA]</scope>
    <source>
        <strain>168</strain>
    </source>
</reference>
<reference key="2">
    <citation type="journal article" date="1997" name="Nature">
        <title>The complete genome sequence of the Gram-positive bacterium Bacillus subtilis.</title>
        <authorList>
            <person name="Kunst F."/>
            <person name="Ogasawara N."/>
            <person name="Moszer I."/>
            <person name="Albertini A.M."/>
            <person name="Alloni G."/>
            <person name="Azevedo V."/>
            <person name="Bertero M.G."/>
            <person name="Bessieres P."/>
            <person name="Bolotin A."/>
            <person name="Borchert S."/>
            <person name="Borriss R."/>
            <person name="Boursier L."/>
            <person name="Brans A."/>
            <person name="Braun M."/>
            <person name="Brignell S.C."/>
            <person name="Bron S."/>
            <person name="Brouillet S."/>
            <person name="Bruschi C.V."/>
            <person name="Caldwell B."/>
            <person name="Capuano V."/>
            <person name="Carter N.M."/>
            <person name="Choi S.-K."/>
            <person name="Codani J.-J."/>
            <person name="Connerton I.F."/>
            <person name="Cummings N.J."/>
            <person name="Daniel R.A."/>
            <person name="Denizot F."/>
            <person name="Devine K.M."/>
            <person name="Duesterhoeft A."/>
            <person name="Ehrlich S.D."/>
            <person name="Emmerson P.T."/>
            <person name="Entian K.-D."/>
            <person name="Errington J."/>
            <person name="Fabret C."/>
            <person name="Ferrari E."/>
            <person name="Foulger D."/>
            <person name="Fritz C."/>
            <person name="Fujita M."/>
            <person name="Fujita Y."/>
            <person name="Fuma S."/>
            <person name="Galizzi A."/>
            <person name="Galleron N."/>
            <person name="Ghim S.-Y."/>
            <person name="Glaser P."/>
            <person name="Goffeau A."/>
            <person name="Golightly E.J."/>
            <person name="Grandi G."/>
            <person name="Guiseppi G."/>
            <person name="Guy B.J."/>
            <person name="Haga K."/>
            <person name="Haiech J."/>
            <person name="Harwood C.R."/>
            <person name="Henaut A."/>
            <person name="Hilbert H."/>
            <person name="Holsappel S."/>
            <person name="Hosono S."/>
            <person name="Hullo M.-F."/>
            <person name="Itaya M."/>
            <person name="Jones L.-M."/>
            <person name="Joris B."/>
            <person name="Karamata D."/>
            <person name="Kasahara Y."/>
            <person name="Klaerr-Blanchard M."/>
            <person name="Klein C."/>
            <person name="Kobayashi Y."/>
            <person name="Koetter P."/>
            <person name="Koningstein G."/>
            <person name="Krogh S."/>
            <person name="Kumano M."/>
            <person name="Kurita K."/>
            <person name="Lapidus A."/>
            <person name="Lardinois S."/>
            <person name="Lauber J."/>
            <person name="Lazarevic V."/>
            <person name="Lee S.-M."/>
            <person name="Levine A."/>
            <person name="Liu H."/>
            <person name="Masuda S."/>
            <person name="Mauel C."/>
            <person name="Medigue C."/>
            <person name="Medina N."/>
            <person name="Mellado R.P."/>
            <person name="Mizuno M."/>
            <person name="Moestl D."/>
            <person name="Nakai S."/>
            <person name="Noback M."/>
            <person name="Noone D."/>
            <person name="O'Reilly M."/>
            <person name="Ogawa K."/>
            <person name="Ogiwara A."/>
            <person name="Oudega B."/>
            <person name="Park S.-H."/>
            <person name="Parro V."/>
            <person name="Pohl T.M."/>
            <person name="Portetelle D."/>
            <person name="Porwollik S."/>
            <person name="Prescott A.M."/>
            <person name="Presecan E."/>
            <person name="Pujic P."/>
            <person name="Purnelle B."/>
            <person name="Rapoport G."/>
            <person name="Rey M."/>
            <person name="Reynolds S."/>
            <person name="Rieger M."/>
            <person name="Rivolta C."/>
            <person name="Rocha E."/>
            <person name="Roche B."/>
            <person name="Rose M."/>
            <person name="Sadaie Y."/>
            <person name="Sato T."/>
            <person name="Scanlan E."/>
            <person name="Schleich S."/>
            <person name="Schroeter R."/>
            <person name="Scoffone F."/>
            <person name="Sekiguchi J."/>
            <person name="Sekowska A."/>
            <person name="Seror S.J."/>
            <person name="Serror P."/>
            <person name="Shin B.-S."/>
            <person name="Soldo B."/>
            <person name="Sorokin A."/>
            <person name="Tacconi E."/>
            <person name="Takagi T."/>
            <person name="Takahashi H."/>
            <person name="Takemaru K."/>
            <person name="Takeuchi M."/>
            <person name="Tamakoshi A."/>
            <person name="Tanaka T."/>
            <person name="Terpstra P."/>
            <person name="Tognoni A."/>
            <person name="Tosato V."/>
            <person name="Uchiyama S."/>
            <person name="Vandenbol M."/>
            <person name="Vannier F."/>
            <person name="Vassarotti A."/>
            <person name="Viari A."/>
            <person name="Wambutt R."/>
            <person name="Wedler E."/>
            <person name="Wedler H."/>
            <person name="Weitzenegger T."/>
            <person name="Winters P."/>
            <person name="Wipat A."/>
            <person name="Yamamoto H."/>
            <person name="Yamane K."/>
            <person name="Yasumoto K."/>
            <person name="Yata K."/>
            <person name="Yoshida K."/>
            <person name="Yoshikawa H.-F."/>
            <person name="Zumstein E."/>
            <person name="Yoshikawa H."/>
            <person name="Danchin A."/>
        </authorList>
    </citation>
    <scope>NUCLEOTIDE SEQUENCE [LARGE SCALE GENOMIC DNA]</scope>
    <source>
        <strain>168</strain>
    </source>
</reference>
<reference key="3">
    <citation type="journal article" date="2003" name="Mol. Microbiol.">
        <title>Identification of additional TnrA-regulated genes of Bacillus subtilis associated with a TnrA box.</title>
        <authorList>
            <person name="Yoshida K."/>
            <person name="Yamaguchi H."/>
            <person name="Kinehara M."/>
            <person name="Ohki Y.-H."/>
            <person name="Nakaura Y."/>
            <person name="Fujita Y."/>
        </authorList>
    </citation>
    <scope>INDUCTION BY TNRA</scope>
</reference>
<reference key="4">
    <citation type="journal article" date="2004" name="J. Bacteriol.">
        <title>Gamma-glutamyltranspeptidase, but not YwrD, is important in utilization of extracellular glutathione as a sulfur source in Bacillus subtilis.</title>
        <authorList>
            <person name="Minami H."/>
            <person name="Suzuki H."/>
            <person name="Kumagai H."/>
        </authorList>
    </citation>
    <scope>LACK OF FUNCTION IN GLUTATHIONE METABOLISM</scope>
    <scope>DISRUPTION PHENOTYPE</scope>
    <source>
        <strain>168 / Marburg / ATCC 6051 / DSM 10 / JCM 1465 / NBRC 13719 / NCIMB 3610 / NRRL NRS-744 / VKM B-501</strain>
    </source>
</reference>
<comment type="function">
    <text evidence="5">Overexpressed protein with an N-terminal His tag has been reported not to hydrolyze glutathione; it is not clear if the construct is processed to 2 subunits (PubMed:14762019).</text>
</comment>
<comment type="catalytic activity">
    <reaction>
        <text>an N-terminal (5-L-glutamyl)-[peptide] + an alpha-amino acid = 5-L-glutamyl amino acid + an N-terminal L-alpha-aminoacyl-[peptide]</text>
        <dbReference type="Rhea" id="RHEA:23904"/>
        <dbReference type="Rhea" id="RHEA-COMP:9780"/>
        <dbReference type="Rhea" id="RHEA-COMP:9795"/>
        <dbReference type="ChEBI" id="CHEBI:77644"/>
        <dbReference type="ChEBI" id="CHEBI:78597"/>
        <dbReference type="ChEBI" id="CHEBI:78599"/>
        <dbReference type="ChEBI" id="CHEBI:78608"/>
        <dbReference type="EC" id="2.3.2.2"/>
    </reaction>
</comment>
<comment type="catalytic activity">
    <reaction>
        <text>glutathione + H2O = L-cysteinylglycine + L-glutamate</text>
        <dbReference type="Rhea" id="RHEA:28807"/>
        <dbReference type="ChEBI" id="CHEBI:15377"/>
        <dbReference type="ChEBI" id="CHEBI:29985"/>
        <dbReference type="ChEBI" id="CHEBI:57925"/>
        <dbReference type="ChEBI" id="CHEBI:61694"/>
        <dbReference type="EC" id="3.4.19.13"/>
    </reaction>
</comment>
<comment type="catalytic activity">
    <reaction>
        <text>an S-substituted glutathione + H2O = an S-substituted L-cysteinylglycine + L-glutamate</text>
        <dbReference type="Rhea" id="RHEA:59468"/>
        <dbReference type="ChEBI" id="CHEBI:15377"/>
        <dbReference type="ChEBI" id="CHEBI:29985"/>
        <dbReference type="ChEBI" id="CHEBI:90779"/>
        <dbReference type="ChEBI" id="CHEBI:143103"/>
        <dbReference type="EC" id="3.4.19.13"/>
    </reaction>
</comment>
<comment type="subunit">
    <text evidence="1">This enzyme consists of two polypeptide chains, which are synthesized from a single polypeptide.</text>
</comment>
<comment type="induction">
    <text evidence="2">Positively regulated by TnrA under nitrogen-limited conditions.</text>
</comment>
<comment type="PTM">
    <text evidence="1">Cleaved by autocatalysis into a large and a small subunit.</text>
</comment>
<comment type="disruption phenotype">
    <text evidence="3">Grows normally with glutathione as a sulfur source.</text>
</comment>
<comment type="miscellaneous">
    <text evidence="3">Is not involved in the utilization of extracellular glutathione as a sulfur source.</text>
</comment>
<comment type="similarity">
    <text evidence="4">Belongs to the gamma-glutamyltransferase family.</text>
</comment>
<proteinExistence type="evidence at protein level"/>
<feature type="chain" id="PRO_0000360767" description="Glutathione hydrolase-like YwrD large chain">
    <location>
        <begin position="1"/>
        <end position="338"/>
    </location>
</feature>
<feature type="chain" id="PRO_0000360768" description="Glutathione hydrolase-like YwrD small chain">
    <location>
        <begin position="339"/>
        <end position="525"/>
    </location>
</feature>
<feature type="active site" description="Nucleophile" evidence="1">
    <location>
        <position position="339"/>
    </location>
</feature>
<sequence>MNKSVIGTKQMVVSPHYLASQAGNRILDKGGNAFDAAVAVSACLAVVYPHMTGLGGDSFWLTFHQETKAVKVYNGSGRSGKNVTRDVYKGKSAIPLRGIDSAITVPGMVDSWDAVLKEYGRLSLADVLEPARDYAQNGFPVSADQCRHTEKNIELLASTPYTADIFTRRGKAPVPGERFVQKELADSLNLIAEKGRSAFYEGDLAQRIVSHLQNNGSYMTIDDFKAHRGEWAAPVSSDYRGYSVYQAPPNSQGFTGLLTLNILENYDFTQIEHGSFEYYHVLVEALKKSFLDRDAVLTDPAFADIPLERLLDKRYAKQLAEEIGYLAIPAESRPVGSDTAYAAVIDADGNAVSFIQSLYFEFGSAVTAGDTGILLQNRGSFFSLDENHVNTLEPRKRTFHTLMPAMVCKGGKPKILYGTQGGEGQPQTQTAIITRMLDYGMHPQQAISEPRWVWGRTWGEEYEGLRVEGRFTDKTIQKLKDSGHLVEVVGDYDPLMGQAAAIKVDEEGFLQGGADPRGDGAAVGI</sequence>
<dbReference type="EC" id="2.3.2.2"/>
<dbReference type="EC" id="3.4.19.13"/>
<dbReference type="EMBL" id="Z93767">
    <property type="protein sequence ID" value="CAB07790.1"/>
    <property type="molecule type" value="Genomic_DNA"/>
</dbReference>
<dbReference type="EMBL" id="AL009126">
    <property type="protein sequence ID" value="CAB15627.1"/>
    <property type="molecule type" value="Genomic_DNA"/>
</dbReference>
<dbReference type="PIR" id="F70068">
    <property type="entry name" value="F70068"/>
</dbReference>
<dbReference type="SMR" id="O05218"/>
<dbReference type="FunCoup" id="O05218">
    <property type="interactions" value="467"/>
</dbReference>
<dbReference type="STRING" id="224308.BSU36100"/>
<dbReference type="MEROPS" id="T03.025"/>
<dbReference type="PaxDb" id="224308-BSU36100"/>
<dbReference type="DNASU" id="936884"/>
<dbReference type="EnsemblBacteria" id="CAB15627">
    <property type="protein sequence ID" value="CAB15627"/>
    <property type="gene ID" value="BSU_36100"/>
</dbReference>
<dbReference type="GeneID" id="936884"/>
<dbReference type="KEGG" id="bsu:BSU36100"/>
<dbReference type="PATRIC" id="fig|224308.179.peg.3907"/>
<dbReference type="eggNOG" id="COG0405">
    <property type="taxonomic scope" value="Bacteria"/>
</dbReference>
<dbReference type="InParanoid" id="O05218"/>
<dbReference type="OrthoDB" id="9781342at2"/>
<dbReference type="PhylomeDB" id="O05218"/>
<dbReference type="BioCyc" id="BSUB:BSU36100-MONOMER"/>
<dbReference type="Proteomes" id="UP000001570">
    <property type="component" value="Chromosome"/>
</dbReference>
<dbReference type="GO" id="GO:0036374">
    <property type="term" value="F:glutathione hydrolase activity"/>
    <property type="evidence" value="ECO:0007669"/>
    <property type="project" value="UniProtKB-EC"/>
</dbReference>
<dbReference type="GO" id="GO:0103068">
    <property type="term" value="F:leukotriene C4 gamma-glutamyl transferase activity"/>
    <property type="evidence" value="ECO:0007669"/>
    <property type="project" value="UniProtKB-EC"/>
</dbReference>
<dbReference type="GO" id="GO:0006751">
    <property type="term" value="P:glutathione catabolic process"/>
    <property type="evidence" value="ECO:0007669"/>
    <property type="project" value="InterPro"/>
</dbReference>
<dbReference type="GO" id="GO:0006508">
    <property type="term" value="P:proteolysis"/>
    <property type="evidence" value="ECO:0007669"/>
    <property type="project" value="UniProtKB-KW"/>
</dbReference>
<dbReference type="Gene3D" id="1.10.246.130">
    <property type="match status" value="1"/>
</dbReference>
<dbReference type="Gene3D" id="3.60.20.40">
    <property type="match status" value="1"/>
</dbReference>
<dbReference type="InterPro" id="IPR052896">
    <property type="entry name" value="GGT-like_enzyme"/>
</dbReference>
<dbReference type="InterPro" id="IPR043138">
    <property type="entry name" value="GGT_lsub_C"/>
</dbReference>
<dbReference type="InterPro" id="IPR000101">
    <property type="entry name" value="GGT_peptidase"/>
</dbReference>
<dbReference type="InterPro" id="IPR043137">
    <property type="entry name" value="GGT_ssub"/>
</dbReference>
<dbReference type="InterPro" id="IPR029055">
    <property type="entry name" value="Ntn_hydrolases_N"/>
</dbReference>
<dbReference type="NCBIfam" id="TIGR00066">
    <property type="entry name" value="g_glut_trans"/>
    <property type="match status" value="1"/>
</dbReference>
<dbReference type="PANTHER" id="PTHR43881">
    <property type="entry name" value="GAMMA-GLUTAMYLTRANSPEPTIDASE (AFU_ORTHOLOGUE AFUA_4G13580)"/>
    <property type="match status" value="1"/>
</dbReference>
<dbReference type="PANTHER" id="PTHR43881:SF1">
    <property type="entry name" value="GAMMA-GLUTAMYLTRANSPEPTIDASE (AFU_ORTHOLOGUE AFUA_4G13580)"/>
    <property type="match status" value="1"/>
</dbReference>
<dbReference type="Pfam" id="PF01019">
    <property type="entry name" value="G_glu_transpept"/>
    <property type="match status" value="1"/>
</dbReference>
<dbReference type="PRINTS" id="PR01210">
    <property type="entry name" value="GGTRANSPTASE"/>
</dbReference>
<dbReference type="SUPFAM" id="SSF56235">
    <property type="entry name" value="N-terminal nucleophile aminohydrolases (Ntn hydrolases)"/>
    <property type="match status" value="1"/>
</dbReference>
<organism>
    <name type="scientific">Bacillus subtilis (strain 168)</name>
    <dbReference type="NCBI Taxonomy" id="224308"/>
    <lineage>
        <taxon>Bacteria</taxon>
        <taxon>Bacillati</taxon>
        <taxon>Bacillota</taxon>
        <taxon>Bacilli</taxon>
        <taxon>Bacillales</taxon>
        <taxon>Bacillaceae</taxon>
        <taxon>Bacillus</taxon>
    </lineage>
</organism>
<accession>O05218</accession>
<accession>Q795C4</accession>
<gene>
    <name type="primary">ywrD</name>
    <name type="ordered locus">BSU36100</name>
</gene>